<proteinExistence type="evidence at transcript level"/>
<accession>O77438</accession>
<accession>Q540W1</accession>
<accession>Q9I7Z7</accession>
<accession>Q9NIU0</accession>
<accession>Q9U902</accession>
<accession>Q9W5D5</accession>
<evidence type="ECO:0000250" key="1"/>
<evidence type="ECO:0000255" key="2"/>
<evidence type="ECO:0000255" key="3">
    <source>
        <dbReference type="PROSITE-ProRule" id="PRU00090"/>
    </source>
</evidence>
<evidence type="ECO:0000269" key="4">
    <source>
    </source>
</evidence>
<evidence type="ECO:0000269" key="5">
    <source>
    </source>
</evidence>
<evidence type="ECO:0000305" key="6"/>
<reference key="1">
    <citation type="journal article" date="1999" name="Development">
        <title>Dfrizzled-3, a new Drosophila Wnt receptor, acting as an attenuator of Wingless signaling in wingless hypomorphic mutants.</title>
        <authorList>
            <person name="Sato A."/>
            <person name="Kojima T."/>
            <person name="Ui-Tei K."/>
            <person name="Miyata Y."/>
            <person name="Saigo K."/>
        </authorList>
    </citation>
    <scope>NUCLEOTIDE SEQUENCE [MRNA]</scope>
    <scope>FUNCTION</scope>
</reference>
<reference key="2">
    <citation type="journal article" date="2000" name="Mech. Dev.">
        <title>The Wingless target gene Dfz3 encodes a new member of the Drosophila Frizzled family.</title>
        <authorList>
            <person name="Sivasankaran R."/>
            <person name="Calleja M."/>
            <person name="Morata G."/>
            <person name="Basler K."/>
        </authorList>
    </citation>
    <scope>NUCLEOTIDE SEQUENCE [MRNA]</scope>
    <scope>FUNCTION</scope>
</reference>
<reference key="3">
    <citation type="journal article" date="2000" name="Science">
        <title>The genome sequence of Drosophila melanogaster.</title>
        <authorList>
            <person name="Adams M.D."/>
            <person name="Celniker S.E."/>
            <person name="Holt R.A."/>
            <person name="Evans C.A."/>
            <person name="Gocayne J.D."/>
            <person name="Amanatides P.G."/>
            <person name="Scherer S.E."/>
            <person name="Li P.W."/>
            <person name="Hoskins R.A."/>
            <person name="Galle R.F."/>
            <person name="George R.A."/>
            <person name="Lewis S.E."/>
            <person name="Richards S."/>
            <person name="Ashburner M."/>
            <person name="Henderson S.N."/>
            <person name="Sutton G.G."/>
            <person name="Wortman J.R."/>
            <person name="Yandell M.D."/>
            <person name="Zhang Q."/>
            <person name="Chen L.X."/>
            <person name="Brandon R.C."/>
            <person name="Rogers Y.-H.C."/>
            <person name="Blazej R.G."/>
            <person name="Champe M."/>
            <person name="Pfeiffer B.D."/>
            <person name="Wan K.H."/>
            <person name="Doyle C."/>
            <person name="Baxter E.G."/>
            <person name="Helt G."/>
            <person name="Nelson C.R."/>
            <person name="Miklos G.L.G."/>
            <person name="Abril J.F."/>
            <person name="Agbayani A."/>
            <person name="An H.-J."/>
            <person name="Andrews-Pfannkoch C."/>
            <person name="Baldwin D."/>
            <person name="Ballew R.M."/>
            <person name="Basu A."/>
            <person name="Baxendale J."/>
            <person name="Bayraktaroglu L."/>
            <person name="Beasley E.M."/>
            <person name="Beeson K.Y."/>
            <person name="Benos P.V."/>
            <person name="Berman B.P."/>
            <person name="Bhandari D."/>
            <person name="Bolshakov S."/>
            <person name="Borkova D."/>
            <person name="Botchan M.R."/>
            <person name="Bouck J."/>
            <person name="Brokstein P."/>
            <person name="Brottier P."/>
            <person name="Burtis K.C."/>
            <person name="Busam D.A."/>
            <person name="Butler H."/>
            <person name="Cadieu E."/>
            <person name="Center A."/>
            <person name="Chandra I."/>
            <person name="Cherry J.M."/>
            <person name="Cawley S."/>
            <person name="Dahlke C."/>
            <person name="Davenport L.B."/>
            <person name="Davies P."/>
            <person name="de Pablos B."/>
            <person name="Delcher A."/>
            <person name="Deng Z."/>
            <person name="Mays A.D."/>
            <person name="Dew I."/>
            <person name="Dietz S.M."/>
            <person name="Dodson K."/>
            <person name="Doup L.E."/>
            <person name="Downes M."/>
            <person name="Dugan-Rocha S."/>
            <person name="Dunkov B.C."/>
            <person name="Dunn P."/>
            <person name="Durbin K.J."/>
            <person name="Evangelista C.C."/>
            <person name="Ferraz C."/>
            <person name="Ferriera S."/>
            <person name="Fleischmann W."/>
            <person name="Fosler C."/>
            <person name="Gabrielian A.E."/>
            <person name="Garg N.S."/>
            <person name="Gelbart W.M."/>
            <person name="Glasser K."/>
            <person name="Glodek A."/>
            <person name="Gong F."/>
            <person name="Gorrell J.H."/>
            <person name="Gu Z."/>
            <person name="Guan P."/>
            <person name="Harris M."/>
            <person name="Harris N.L."/>
            <person name="Harvey D.A."/>
            <person name="Heiman T.J."/>
            <person name="Hernandez J.R."/>
            <person name="Houck J."/>
            <person name="Hostin D."/>
            <person name="Houston K.A."/>
            <person name="Howland T.J."/>
            <person name="Wei M.-H."/>
            <person name="Ibegwam C."/>
            <person name="Jalali M."/>
            <person name="Kalush F."/>
            <person name="Karpen G.H."/>
            <person name="Ke Z."/>
            <person name="Kennison J.A."/>
            <person name="Ketchum K.A."/>
            <person name="Kimmel B.E."/>
            <person name="Kodira C.D."/>
            <person name="Kraft C.L."/>
            <person name="Kravitz S."/>
            <person name="Kulp D."/>
            <person name="Lai Z."/>
            <person name="Lasko P."/>
            <person name="Lei Y."/>
            <person name="Levitsky A.A."/>
            <person name="Li J.H."/>
            <person name="Li Z."/>
            <person name="Liang Y."/>
            <person name="Lin X."/>
            <person name="Liu X."/>
            <person name="Mattei B."/>
            <person name="McIntosh T.C."/>
            <person name="McLeod M.P."/>
            <person name="McPherson D."/>
            <person name="Merkulov G."/>
            <person name="Milshina N.V."/>
            <person name="Mobarry C."/>
            <person name="Morris J."/>
            <person name="Moshrefi A."/>
            <person name="Mount S.M."/>
            <person name="Moy M."/>
            <person name="Murphy B."/>
            <person name="Murphy L."/>
            <person name="Muzny D.M."/>
            <person name="Nelson D.L."/>
            <person name="Nelson D.R."/>
            <person name="Nelson K.A."/>
            <person name="Nixon K."/>
            <person name="Nusskern D.R."/>
            <person name="Pacleb J.M."/>
            <person name="Palazzolo M."/>
            <person name="Pittman G.S."/>
            <person name="Pan S."/>
            <person name="Pollard J."/>
            <person name="Puri V."/>
            <person name="Reese M.G."/>
            <person name="Reinert K."/>
            <person name="Remington K."/>
            <person name="Saunders R.D.C."/>
            <person name="Scheeler F."/>
            <person name="Shen H."/>
            <person name="Shue B.C."/>
            <person name="Siden-Kiamos I."/>
            <person name="Simpson M."/>
            <person name="Skupski M.P."/>
            <person name="Smith T.J."/>
            <person name="Spier E."/>
            <person name="Spradling A.C."/>
            <person name="Stapleton M."/>
            <person name="Strong R."/>
            <person name="Sun E."/>
            <person name="Svirskas R."/>
            <person name="Tector C."/>
            <person name="Turner R."/>
            <person name="Venter E."/>
            <person name="Wang A.H."/>
            <person name="Wang X."/>
            <person name="Wang Z.-Y."/>
            <person name="Wassarman D.A."/>
            <person name="Weinstock G.M."/>
            <person name="Weissenbach J."/>
            <person name="Williams S.M."/>
            <person name="Woodage T."/>
            <person name="Worley K.C."/>
            <person name="Wu D."/>
            <person name="Yang S."/>
            <person name="Yao Q.A."/>
            <person name="Ye J."/>
            <person name="Yeh R.-F."/>
            <person name="Zaveri J.S."/>
            <person name="Zhan M."/>
            <person name="Zhang G."/>
            <person name="Zhao Q."/>
            <person name="Zheng L."/>
            <person name="Zheng X.H."/>
            <person name="Zhong F.N."/>
            <person name="Zhong W."/>
            <person name="Zhou X."/>
            <person name="Zhu S.C."/>
            <person name="Zhu X."/>
            <person name="Smith H.O."/>
            <person name="Gibbs R.A."/>
            <person name="Myers E.W."/>
            <person name="Rubin G.M."/>
            <person name="Venter J.C."/>
        </authorList>
    </citation>
    <scope>NUCLEOTIDE SEQUENCE [LARGE SCALE GENOMIC DNA]</scope>
    <source>
        <strain>Berkeley</strain>
    </source>
</reference>
<reference key="4">
    <citation type="journal article" date="2002" name="Genome Biol.">
        <title>Annotation of the Drosophila melanogaster euchromatic genome: a systematic review.</title>
        <authorList>
            <person name="Misra S."/>
            <person name="Crosby M.A."/>
            <person name="Mungall C.J."/>
            <person name="Matthews B.B."/>
            <person name="Campbell K.S."/>
            <person name="Hradecky P."/>
            <person name="Huang Y."/>
            <person name="Kaminker J.S."/>
            <person name="Millburn G.H."/>
            <person name="Prochnik S.E."/>
            <person name="Smith C.D."/>
            <person name="Tupy J.L."/>
            <person name="Whitfield E.J."/>
            <person name="Bayraktaroglu L."/>
            <person name="Berman B.P."/>
            <person name="Bettencourt B.R."/>
            <person name="Celniker S.E."/>
            <person name="de Grey A.D.N.J."/>
            <person name="Drysdale R.A."/>
            <person name="Harris N.L."/>
            <person name="Richter J."/>
            <person name="Russo S."/>
            <person name="Schroeder A.J."/>
            <person name="Shu S.Q."/>
            <person name="Stapleton M."/>
            <person name="Yamada C."/>
            <person name="Ashburner M."/>
            <person name="Gelbart W.M."/>
            <person name="Rubin G.M."/>
            <person name="Lewis S.E."/>
        </authorList>
    </citation>
    <scope>GENOME REANNOTATION</scope>
    <source>
        <strain>Berkeley</strain>
    </source>
</reference>
<reference key="5">
    <citation type="journal article" date="2000" name="Science">
        <title>From sequence to chromosome: the tip of the X chromosome of D. melanogaster.</title>
        <authorList>
            <person name="Benos P.V."/>
            <person name="Gatt M.K."/>
            <person name="Ashburner M."/>
            <person name="Murphy L."/>
            <person name="Harris D."/>
            <person name="Barrell B.G."/>
            <person name="Ferraz C."/>
            <person name="Vidal S."/>
            <person name="Brun C."/>
            <person name="Demailles J."/>
            <person name="Cadieu E."/>
            <person name="Dreano S."/>
            <person name="Gloux S."/>
            <person name="Lelaure V."/>
            <person name="Mottier S."/>
            <person name="Galibert F."/>
            <person name="Borkova D."/>
            <person name="Minana B."/>
            <person name="Kafatos F.C."/>
            <person name="Louis C."/>
            <person name="Siden-Kiamos I."/>
            <person name="Bolshakov S."/>
            <person name="Papagiannakis G."/>
            <person name="Spanos L."/>
            <person name="Cox S."/>
            <person name="Madueno E."/>
            <person name="de Pablos B."/>
            <person name="Modolell J."/>
            <person name="Peter A."/>
            <person name="Schoettler P."/>
            <person name="Werner M."/>
            <person name="Mourkioti F."/>
            <person name="Beinert N."/>
            <person name="Dowe G."/>
            <person name="Schaefer U."/>
            <person name="Jaeckle H."/>
            <person name="Bucheton A."/>
            <person name="Callister D.M."/>
            <person name="Campbell L.A."/>
            <person name="Darlamitsou A."/>
            <person name="Henderson N.S."/>
            <person name="McMillan P.J."/>
            <person name="Salles C."/>
            <person name="Tait E.A."/>
            <person name="Valenti P."/>
            <person name="Saunders R.D.C."/>
            <person name="Glover D.M."/>
        </authorList>
    </citation>
    <scope>NUCLEOTIDE SEQUENCE [LARGE SCALE GENOMIC DNA]</scope>
    <source>
        <strain>Oregon-R</strain>
    </source>
</reference>
<reference key="6">
    <citation type="submission" date="2003-12" db="EMBL/GenBank/DDBJ databases">
        <authorList>
            <person name="Stapleton M."/>
            <person name="Brokstein P."/>
            <person name="Hong L."/>
            <person name="Agbayani A."/>
            <person name="Carlson J.W."/>
            <person name="Champe M."/>
            <person name="Chavez C."/>
            <person name="Dorsett V."/>
            <person name="Dresnek D."/>
            <person name="Farfan D."/>
            <person name="Frise E."/>
            <person name="George R.A."/>
            <person name="Gonzalez M."/>
            <person name="Guarin H."/>
            <person name="Kronmiller B."/>
            <person name="Li P.W."/>
            <person name="Liao G."/>
            <person name="Miranda A."/>
            <person name="Mungall C.J."/>
            <person name="Nunoo J."/>
            <person name="Pacleb J.M."/>
            <person name="Paragas V."/>
            <person name="Park S."/>
            <person name="Patel S."/>
            <person name="Phouanenavong S."/>
            <person name="Wan K.H."/>
            <person name="Yu C."/>
            <person name="Lewis S.E."/>
            <person name="Rubin G.M."/>
            <person name="Celniker S.E."/>
        </authorList>
    </citation>
    <scope>NUCLEOTIDE SEQUENCE [LARGE SCALE MRNA]</scope>
    <source>
        <strain>Berkeley</strain>
        <tissue>Embryo</tissue>
    </source>
</reference>
<comment type="function">
    <text evidence="4 5">Receptor for Wnt proteins. Most of frizzled receptors are coupled to the beta-catenin canonical signaling pathway, which leads to the activation of disheveled proteins, inhibition of GSK-3 kinase, nuclear accumulation of beta-catenin and activation of Wnt target genes. A second signaling pathway involving PKC and calcium fluxes has been seen for some family members, but it is not yet clear if it represents a distinct pathway or if it can be integrated in the canonical pathway, as PKC seems to be required for Wnt-mediated inactivation of GSK-3 kinase. Both pathways seem to involve interactions with G-proteins. Required to coordinate the cytoskeletons of epidermal cells to produce a parallel array of cuticular hairs and bristles.</text>
</comment>
<comment type="subcellular location">
    <subcellularLocation>
        <location evidence="6">Membrane</location>
        <topology evidence="6">Multi-pass membrane protein</topology>
    </subcellularLocation>
</comment>
<comment type="tissue specificity">
    <text>Wing, leg and eye imaginal disks. In embryos, expressed is seen in brain, proventriculus, Malpighian tubules, anal plate and visceral mesoderm of parasegment 8.</text>
</comment>
<comment type="developmental stage">
    <text>Expressed in embryos from stage 11 and in larvae.</text>
</comment>
<comment type="domain">
    <text evidence="1">The FZ domain is involved in binding with Wnt ligands.</text>
</comment>
<comment type="similarity">
    <text evidence="6">Belongs to the G-protein coupled receptor Fz/Smo family.</text>
</comment>
<comment type="sequence caution" evidence="6">
    <conflict type="erroneous gene model prediction">
        <sequence resource="EMBL-CDS" id="CAA20896"/>
    </conflict>
</comment>
<gene>
    <name type="primary">fz3</name>
    <name type="ORF">CG16785</name>
</gene>
<feature type="signal peptide" evidence="2">
    <location>
        <begin position="1"/>
        <end position="19"/>
    </location>
</feature>
<feature type="chain" id="PRO_0000013013" description="Frizzled-3">
    <location>
        <begin position="20"/>
        <end position="581"/>
    </location>
</feature>
<feature type="topological domain" description="Extracellular" evidence="2">
    <location>
        <begin position="20"/>
        <end position="237"/>
    </location>
</feature>
<feature type="transmembrane region" description="Helical; Name=1" evidence="2">
    <location>
        <begin position="238"/>
        <end position="258"/>
    </location>
</feature>
<feature type="topological domain" description="Cytoplasmic" evidence="2">
    <location>
        <begin position="259"/>
        <end position="270"/>
    </location>
</feature>
<feature type="transmembrane region" description="Helical; Name=2" evidence="2">
    <location>
        <begin position="271"/>
        <end position="291"/>
    </location>
</feature>
<feature type="topological domain" description="Extracellular" evidence="2">
    <location>
        <begin position="292"/>
        <end position="321"/>
    </location>
</feature>
<feature type="transmembrane region" description="Helical; Name=3" evidence="2">
    <location>
        <begin position="322"/>
        <end position="342"/>
    </location>
</feature>
<feature type="topological domain" description="Cytoplasmic" evidence="2">
    <location>
        <begin position="343"/>
        <end position="359"/>
    </location>
</feature>
<feature type="transmembrane region" description="Helical; Name=4" evidence="2">
    <location>
        <begin position="360"/>
        <end position="380"/>
    </location>
</feature>
<feature type="topological domain" description="Extracellular" evidence="2">
    <location>
        <begin position="381"/>
        <end position="393"/>
    </location>
</feature>
<feature type="transmembrane region" description="Helical; Name=5" evidence="2">
    <location>
        <begin position="394"/>
        <end position="414"/>
    </location>
</feature>
<feature type="topological domain" description="Cytoplasmic" evidence="2">
    <location>
        <begin position="415"/>
        <end position="442"/>
    </location>
</feature>
<feature type="transmembrane region" description="Helical; Name=6" evidence="2">
    <location>
        <begin position="443"/>
        <end position="463"/>
    </location>
</feature>
<feature type="topological domain" description="Extracellular" evidence="2">
    <location>
        <begin position="464"/>
        <end position="488"/>
    </location>
</feature>
<feature type="transmembrane region" description="Helical; Name=7" evidence="2">
    <location>
        <begin position="489"/>
        <end position="509"/>
    </location>
</feature>
<feature type="topological domain" description="Cytoplasmic" evidence="2">
    <location>
        <begin position="510"/>
        <end position="581"/>
    </location>
</feature>
<feature type="domain" description="FZ" evidence="3">
    <location>
        <begin position="35"/>
        <end position="156"/>
    </location>
</feature>
<feature type="short sequence motif" description="PDZ-binding">
    <location>
        <begin position="579"/>
        <end position="581"/>
    </location>
</feature>
<feature type="glycosylation site" description="N-linked (GlcNAc...) asparagine" evidence="2">
    <location>
        <position position="54"/>
    </location>
</feature>
<feature type="glycosylation site" description="N-linked (GlcNAc...) asparagine" evidence="2">
    <location>
        <position position="206"/>
    </location>
</feature>
<feature type="disulfide bond" evidence="3">
    <location>
        <begin position="40"/>
        <end position="101"/>
    </location>
</feature>
<feature type="disulfide bond" evidence="3">
    <location>
        <begin position="48"/>
        <end position="94"/>
    </location>
</feature>
<feature type="disulfide bond" evidence="3">
    <location>
        <begin position="85"/>
        <end position="123"/>
    </location>
</feature>
<feature type="disulfide bond" evidence="3">
    <location>
        <begin position="112"/>
        <end position="153"/>
    </location>
</feature>
<feature type="disulfide bond" evidence="3">
    <location>
        <begin position="116"/>
        <end position="141"/>
    </location>
</feature>
<feature type="sequence conflict" description="In Ref. 1; BAA84677." evidence="6" ref="1">
    <original>T</original>
    <variation>I</variation>
    <location>
        <position position="56"/>
    </location>
</feature>
<feature type="sequence conflict" description="In Ref. 1; BAA84677." evidence="6" ref="1">
    <original>A</original>
    <variation>V</variation>
    <location>
        <position position="192"/>
    </location>
</feature>
<feature type="sequence conflict" description="In Ref. 1; BAA84677." evidence="6" ref="1">
    <original>L</original>
    <variation>P</variation>
    <location>
        <position position="276"/>
    </location>
</feature>
<feature type="sequence conflict" description="In Ref. 3; AAF45547/AAM50295." evidence="6" ref="3">
    <original>G</original>
    <variation>W</variation>
    <location>
        <position position="304"/>
    </location>
</feature>
<feature type="sequence conflict" description="In Ref. 1; BAA84677." evidence="6" ref="1">
    <original>A</original>
    <variation>V</variation>
    <location>
        <position position="376"/>
    </location>
</feature>
<dbReference type="EMBL" id="AB018565">
    <property type="protein sequence ID" value="BAA84677.1"/>
    <property type="molecule type" value="mRNA"/>
</dbReference>
<dbReference type="EMBL" id="AF195242">
    <property type="protein sequence ID" value="AAF63250.1"/>
    <property type="molecule type" value="mRNA"/>
</dbReference>
<dbReference type="EMBL" id="AE014298">
    <property type="protein sequence ID" value="AAF45547.1"/>
    <property type="molecule type" value="Genomic_DNA"/>
</dbReference>
<dbReference type="EMBL" id="AL031583">
    <property type="protein sequence ID" value="CAA20896.1"/>
    <property type="status" value="ALT_SEQ"/>
    <property type="molecule type" value="Genomic_DNA"/>
</dbReference>
<dbReference type="EMBL" id="AL132792">
    <property type="status" value="NOT_ANNOTATED_CDS"/>
    <property type="molecule type" value="Genomic_DNA"/>
</dbReference>
<dbReference type="EMBL" id="AY119641">
    <property type="protein sequence ID" value="AAM50295.1"/>
    <property type="molecule type" value="mRNA"/>
</dbReference>
<dbReference type="PIR" id="T13484">
    <property type="entry name" value="T13484"/>
</dbReference>
<dbReference type="RefSeq" id="NP_001284760.1">
    <property type="nucleotide sequence ID" value="NM_001297831.1"/>
</dbReference>
<dbReference type="RefSeq" id="NP_525035.2">
    <property type="nucleotide sequence ID" value="NM_080296.3"/>
</dbReference>
<dbReference type="SMR" id="O77438"/>
<dbReference type="BioGRID" id="57591">
    <property type="interactions" value="4"/>
</dbReference>
<dbReference type="FunCoup" id="O77438">
    <property type="interactions" value="186"/>
</dbReference>
<dbReference type="STRING" id="7227.FBpp0111841"/>
<dbReference type="GlyCosmos" id="O77438">
    <property type="glycosylation" value="2 sites, No reported glycans"/>
</dbReference>
<dbReference type="GlyGen" id="O77438">
    <property type="glycosylation" value="2 sites"/>
</dbReference>
<dbReference type="PaxDb" id="7227-FBpp0111841"/>
<dbReference type="DNASU" id="31023"/>
<dbReference type="GeneID" id="31023"/>
<dbReference type="KEGG" id="dme:Dmel_CG16785"/>
<dbReference type="AGR" id="FB:FBgn0027343"/>
<dbReference type="CTD" id="31023"/>
<dbReference type="FlyBase" id="FBgn0027343">
    <property type="gene designation" value="fz3"/>
</dbReference>
<dbReference type="VEuPathDB" id="VectorBase:FBgn0027343"/>
<dbReference type="eggNOG" id="KOG3577">
    <property type="taxonomic scope" value="Eukaryota"/>
</dbReference>
<dbReference type="HOGENOM" id="CLU_007873_5_1_1"/>
<dbReference type="InParanoid" id="O77438"/>
<dbReference type="OrthoDB" id="5959102at2759"/>
<dbReference type="PhylomeDB" id="O77438"/>
<dbReference type="SignaLink" id="O77438"/>
<dbReference type="BioGRID-ORCS" id="31023">
    <property type="hits" value="0 hits in 1 CRISPR screen"/>
</dbReference>
<dbReference type="GenomeRNAi" id="31023"/>
<dbReference type="PRO" id="PR:O77438"/>
<dbReference type="Proteomes" id="UP000000803">
    <property type="component" value="Chromosome X"/>
</dbReference>
<dbReference type="ExpressionAtlas" id="O77438">
    <property type="expression patterns" value="baseline and differential"/>
</dbReference>
<dbReference type="GO" id="GO:0005615">
    <property type="term" value="C:extracellular space"/>
    <property type="evidence" value="ECO:0000318"/>
    <property type="project" value="GO_Central"/>
</dbReference>
<dbReference type="GO" id="GO:0016020">
    <property type="term" value="C:membrane"/>
    <property type="evidence" value="ECO:0000250"/>
    <property type="project" value="FlyBase"/>
</dbReference>
<dbReference type="GO" id="GO:0004930">
    <property type="term" value="F:G protein-coupled receptor activity"/>
    <property type="evidence" value="ECO:0007669"/>
    <property type="project" value="UniProtKB-KW"/>
</dbReference>
<dbReference type="GO" id="GO:0017147">
    <property type="term" value="F:Wnt-protein binding"/>
    <property type="evidence" value="ECO:0000353"/>
    <property type="project" value="FlyBase"/>
</dbReference>
<dbReference type="GO" id="GO:0060070">
    <property type="term" value="P:canonical Wnt signaling pathway"/>
    <property type="evidence" value="ECO:0000318"/>
    <property type="project" value="GO_Central"/>
</dbReference>
<dbReference type="GO" id="GO:0007163">
    <property type="term" value="P:establishment or maintenance of cell polarity"/>
    <property type="evidence" value="ECO:0000315"/>
    <property type="project" value="UniProtKB"/>
</dbReference>
<dbReference type="GO" id="GO:0035567">
    <property type="term" value="P:non-canonical Wnt signaling pathway"/>
    <property type="evidence" value="ECO:0000318"/>
    <property type="project" value="GO_Central"/>
</dbReference>
<dbReference type="CDD" id="cd15031">
    <property type="entry name" value="7tmF_FZD3_insect"/>
    <property type="match status" value="1"/>
</dbReference>
<dbReference type="FunFam" id="1.10.2000.10:FF:000036">
    <property type="entry name" value="Frizzled-3"/>
    <property type="match status" value="1"/>
</dbReference>
<dbReference type="Gene3D" id="1.10.2000.10">
    <property type="entry name" value="Frizzled cysteine-rich domain"/>
    <property type="match status" value="1"/>
</dbReference>
<dbReference type="Gene3D" id="1.20.1070.10">
    <property type="entry name" value="Rhodopsin 7-helix transmembrane proteins"/>
    <property type="match status" value="1"/>
</dbReference>
<dbReference type="InterPro" id="IPR015526">
    <property type="entry name" value="Frizzled/SFRP"/>
</dbReference>
<dbReference type="InterPro" id="IPR000539">
    <property type="entry name" value="Frizzled/Smoothened_7TM"/>
</dbReference>
<dbReference type="InterPro" id="IPR020067">
    <property type="entry name" value="Frizzled_dom"/>
</dbReference>
<dbReference type="InterPro" id="IPR036790">
    <property type="entry name" value="Frizzled_dom_sf"/>
</dbReference>
<dbReference type="InterPro" id="IPR017981">
    <property type="entry name" value="GPCR_2-like_7TM"/>
</dbReference>
<dbReference type="PANTHER" id="PTHR11309">
    <property type="entry name" value="FRIZZLED"/>
    <property type="match status" value="1"/>
</dbReference>
<dbReference type="PANTHER" id="PTHR11309:SF142">
    <property type="entry name" value="FRIZZLED-3"/>
    <property type="match status" value="1"/>
</dbReference>
<dbReference type="Pfam" id="PF01534">
    <property type="entry name" value="Frizzled"/>
    <property type="match status" value="1"/>
</dbReference>
<dbReference type="Pfam" id="PF01392">
    <property type="entry name" value="Fz"/>
    <property type="match status" value="1"/>
</dbReference>
<dbReference type="PRINTS" id="PR00489">
    <property type="entry name" value="FRIZZLED"/>
</dbReference>
<dbReference type="SMART" id="SM00063">
    <property type="entry name" value="FRI"/>
    <property type="match status" value="1"/>
</dbReference>
<dbReference type="SMART" id="SM01330">
    <property type="entry name" value="Frizzled"/>
    <property type="match status" value="1"/>
</dbReference>
<dbReference type="SUPFAM" id="SSF63501">
    <property type="entry name" value="Frizzled cysteine-rich domain"/>
    <property type="match status" value="1"/>
</dbReference>
<dbReference type="PROSITE" id="PS50038">
    <property type="entry name" value="FZ"/>
    <property type="match status" value="1"/>
</dbReference>
<dbReference type="PROSITE" id="PS50261">
    <property type="entry name" value="G_PROTEIN_RECEP_F2_4"/>
    <property type="match status" value="1"/>
</dbReference>
<organism>
    <name type="scientific">Drosophila melanogaster</name>
    <name type="common">Fruit fly</name>
    <dbReference type="NCBI Taxonomy" id="7227"/>
    <lineage>
        <taxon>Eukaryota</taxon>
        <taxon>Metazoa</taxon>
        <taxon>Ecdysozoa</taxon>
        <taxon>Arthropoda</taxon>
        <taxon>Hexapoda</taxon>
        <taxon>Insecta</taxon>
        <taxon>Pterygota</taxon>
        <taxon>Neoptera</taxon>
        <taxon>Endopterygota</taxon>
        <taxon>Diptera</taxon>
        <taxon>Brachycera</taxon>
        <taxon>Muscomorpha</taxon>
        <taxon>Ephydroidea</taxon>
        <taxon>Drosophilidae</taxon>
        <taxon>Drosophila</taxon>
        <taxon>Sophophora</taxon>
    </lineage>
</organism>
<name>FRIZ3_DROME</name>
<keyword id="KW-0217">Developmental protein</keyword>
<keyword id="KW-1015">Disulfide bond</keyword>
<keyword id="KW-0297">G-protein coupled receptor</keyword>
<keyword id="KW-0325">Glycoprotein</keyword>
<keyword id="KW-0472">Membrane</keyword>
<keyword id="KW-0675">Receptor</keyword>
<keyword id="KW-1185">Reference proteome</keyword>
<keyword id="KW-0732">Signal</keyword>
<keyword id="KW-0807">Transducer</keyword>
<keyword id="KW-0812">Transmembrane</keyword>
<keyword id="KW-1133">Transmembrane helix</keyword>
<keyword id="KW-0879">Wnt signaling pathway</keyword>
<protein>
    <recommendedName>
        <fullName>Frizzled-3</fullName>
        <shortName>dFz3</shortName>
    </recommendedName>
</protein>
<sequence length="581" mass="63252">MYAASILILHLTWAVATIAANGAGHNGPVASGAGPNGLQCQPIAVSACQGLGYNMTALPNLAGHTNQLEAELQIAKLVPLIESGCSRRARFLLCSSLFPLCTPDVPRPVAACKLLCETVRGECMENAPPELMELWPSFLNCDGLPQPEKHELCMQIPQEVAVPGGSPSGPPTTGSPGVEDHPQTYRFWKSGASPTSDLAGVLCPQNFSGSPFNPEECVPQCQRDAFHTSSQKKTSETLILGLSAVCFVLTLFALVTFWAEPTRFGYPERPVLFLCLCYNLFSVCYLERIVFHNQARMHDVELQGRLMRPGCLLTPPCLASYITTSYLSLCAASWWLIFALCFYLSSHKKWSSEALEKRSGLFHVLAWVPPLAPPIAALLLEKVRPSELTGMCYAPGFVELPALVLLLLGLYFTLRASRSLLSLQQQLQPTLAHHRFGQIRKRFVLFSLLYFAPTTAGVVAALCERYADSVPSCSTPDDCLSPTPLSAWPALVRIFFQLVGGTLTGLWVWSRKTCESYRNRLGASGTPTSSLMNQSKAAGALPKKHLYTSGKSMLPTGGITPLYAGISFHNVPVYNPNQSRV</sequence>